<evidence type="ECO:0000255" key="1"/>
<evidence type="ECO:0000305" key="2"/>
<protein>
    <recommendedName>
        <fullName>Putative uncharacterized protein DDB_G0275485</fullName>
    </recommendedName>
</protein>
<comment type="subcellular location">
    <subcellularLocation>
        <location evidence="2">Membrane</location>
        <topology evidence="2">Single-pass membrane protein</topology>
    </subcellularLocation>
</comment>
<comment type="caution">
    <text evidence="2">Product of a dubious gene prediction.</text>
</comment>
<feature type="chain" id="PRO_0000348118" description="Putative uncharacterized protein DDB_G0275485">
    <location>
        <begin position="1"/>
        <end position="42"/>
    </location>
</feature>
<feature type="transmembrane region" description="Helical" evidence="1">
    <location>
        <begin position="15"/>
        <end position="37"/>
    </location>
</feature>
<reference key="1">
    <citation type="journal article" date="2002" name="Nature">
        <title>Sequence and analysis of chromosome 2 of Dictyostelium discoideum.</title>
        <authorList>
            <person name="Gloeckner G."/>
            <person name="Eichinger L."/>
            <person name="Szafranski K."/>
            <person name="Pachebat J.A."/>
            <person name="Bankier A.T."/>
            <person name="Dear P.H."/>
            <person name="Lehmann R."/>
            <person name="Baumgart C."/>
            <person name="Parra G."/>
            <person name="Abril J.F."/>
            <person name="Guigo R."/>
            <person name="Kumpf K."/>
            <person name="Tunggal B."/>
            <person name="Cox E.C."/>
            <person name="Quail M.A."/>
            <person name="Platzer M."/>
            <person name="Rosenthal A."/>
            <person name="Noegel A.A."/>
        </authorList>
    </citation>
    <scope>NUCLEOTIDE SEQUENCE [LARGE SCALE GENOMIC DNA]</scope>
    <source>
        <strain>AX4</strain>
    </source>
</reference>
<reference key="2">
    <citation type="journal article" date="2005" name="Nature">
        <title>The genome of the social amoeba Dictyostelium discoideum.</title>
        <authorList>
            <person name="Eichinger L."/>
            <person name="Pachebat J.A."/>
            <person name="Gloeckner G."/>
            <person name="Rajandream M.A."/>
            <person name="Sucgang R."/>
            <person name="Berriman M."/>
            <person name="Song J."/>
            <person name="Olsen R."/>
            <person name="Szafranski K."/>
            <person name="Xu Q."/>
            <person name="Tunggal B."/>
            <person name="Kummerfeld S."/>
            <person name="Madera M."/>
            <person name="Konfortov B.A."/>
            <person name="Rivero F."/>
            <person name="Bankier A.T."/>
            <person name="Lehmann R."/>
            <person name="Hamlin N."/>
            <person name="Davies R."/>
            <person name="Gaudet P."/>
            <person name="Fey P."/>
            <person name="Pilcher K."/>
            <person name="Chen G."/>
            <person name="Saunders D."/>
            <person name="Sodergren E.J."/>
            <person name="Davis P."/>
            <person name="Kerhornou A."/>
            <person name="Nie X."/>
            <person name="Hall N."/>
            <person name="Anjard C."/>
            <person name="Hemphill L."/>
            <person name="Bason N."/>
            <person name="Farbrother P."/>
            <person name="Desany B."/>
            <person name="Just E."/>
            <person name="Morio T."/>
            <person name="Rost R."/>
            <person name="Churcher C.M."/>
            <person name="Cooper J."/>
            <person name="Haydock S."/>
            <person name="van Driessche N."/>
            <person name="Cronin A."/>
            <person name="Goodhead I."/>
            <person name="Muzny D.M."/>
            <person name="Mourier T."/>
            <person name="Pain A."/>
            <person name="Lu M."/>
            <person name="Harper D."/>
            <person name="Lindsay R."/>
            <person name="Hauser H."/>
            <person name="James K.D."/>
            <person name="Quiles M."/>
            <person name="Madan Babu M."/>
            <person name="Saito T."/>
            <person name="Buchrieser C."/>
            <person name="Wardroper A."/>
            <person name="Felder M."/>
            <person name="Thangavelu M."/>
            <person name="Johnson D."/>
            <person name="Knights A."/>
            <person name="Loulseged H."/>
            <person name="Mungall K.L."/>
            <person name="Oliver K."/>
            <person name="Price C."/>
            <person name="Quail M.A."/>
            <person name="Urushihara H."/>
            <person name="Hernandez J."/>
            <person name="Rabbinowitsch E."/>
            <person name="Steffen D."/>
            <person name="Sanders M."/>
            <person name="Ma J."/>
            <person name="Kohara Y."/>
            <person name="Sharp S."/>
            <person name="Simmonds M.N."/>
            <person name="Spiegler S."/>
            <person name="Tivey A."/>
            <person name="Sugano S."/>
            <person name="White B."/>
            <person name="Walker D."/>
            <person name="Woodward J.R."/>
            <person name="Winckler T."/>
            <person name="Tanaka Y."/>
            <person name="Shaulsky G."/>
            <person name="Schleicher M."/>
            <person name="Weinstock G.M."/>
            <person name="Rosenthal A."/>
            <person name="Cox E.C."/>
            <person name="Chisholm R.L."/>
            <person name="Gibbs R.A."/>
            <person name="Loomis W.F."/>
            <person name="Platzer M."/>
            <person name="Kay R.R."/>
            <person name="Williams J.G."/>
            <person name="Dear P.H."/>
            <person name="Noegel A.A."/>
            <person name="Barrell B.G."/>
            <person name="Kuspa A."/>
        </authorList>
    </citation>
    <scope>NUCLEOTIDE SEQUENCE [LARGE SCALE GENOMIC DNA]</scope>
    <source>
        <strain>AX4</strain>
    </source>
</reference>
<sequence>MSTCEITSGNCRNFPLILAVDCAIIIPNTNFIHSFLIYSLRI</sequence>
<accession>Q86ID5</accession>
<accession>Q552U6</accession>
<proteinExistence type="uncertain"/>
<dbReference type="EMBL" id="AAFI02000013">
    <property type="protein sequence ID" value="EAL69493.1"/>
    <property type="molecule type" value="Genomic_DNA"/>
</dbReference>
<dbReference type="RefSeq" id="XP_643585.1">
    <property type="nucleotide sequence ID" value="XM_638493.1"/>
</dbReference>
<dbReference type="PaxDb" id="44689-DDB0167162"/>
<dbReference type="EnsemblProtists" id="EAL69493">
    <property type="protein sequence ID" value="EAL69493"/>
    <property type="gene ID" value="DDB_G0275485"/>
</dbReference>
<dbReference type="GeneID" id="8620172"/>
<dbReference type="KEGG" id="ddi:DDB_G0275485"/>
<dbReference type="dictyBase" id="DDB_G0275485"/>
<dbReference type="VEuPathDB" id="AmoebaDB:DDB_G0275485"/>
<dbReference type="HOGENOM" id="CLU_3261614_0_0_1"/>
<dbReference type="InParanoid" id="Q86ID5"/>
<dbReference type="Proteomes" id="UP000002195">
    <property type="component" value="Chromosome 2"/>
</dbReference>
<dbReference type="GO" id="GO:0016020">
    <property type="term" value="C:membrane"/>
    <property type="evidence" value="ECO:0007669"/>
    <property type="project" value="UniProtKB-SubCell"/>
</dbReference>
<name>Y7162_DICDI</name>
<keyword id="KW-0472">Membrane</keyword>
<keyword id="KW-1185">Reference proteome</keyword>
<keyword id="KW-0812">Transmembrane</keyword>
<keyword id="KW-1133">Transmembrane helix</keyword>
<organism>
    <name type="scientific">Dictyostelium discoideum</name>
    <name type="common">Social amoeba</name>
    <dbReference type="NCBI Taxonomy" id="44689"/>
    <lineage>
        <taxon>Eukaryota</taxon>
        <taxon>Amoebozoa</taxon>
        <taxon>Evosea</taxon>
        <taxon>Eumycetozoa</taxon>
        <taxon>Dictyostelia</taxon>
        <taxon>Dictyosteliales</taxon>
        <taxon>Dictyosteliaceae</taxon>
        <taxon>Dictyostelium</taxon>
    </lineage>
</organism>
<gene>
    <name type="ORF">DDB_G0275485</name>
</gene>